<reference key="1">
    <citation type="submission" date="2008-04" db="EMBL/GenBank/DDBJ databases">
        <title>Complete sequence of Clostridium botulinum strain Eklund.</title>
        <authorList>
            <person name="Brinkac L.M."/>
            <person name="Brown J.L."/>
            <person name="Bruce D."/>
            <person name="Detter C."/>
            <person name="Munk C."/>
            <person name="Smith L.A."/>
            <person name="Smith T.J."/>
            <person name="Sutton G."/>
            <person name="Brettin T.S."/>
        </authorList>
    </citation>
    <scope>NUCLEOTIDE SEQUENCE [LARGE SCALE GENOMIC DNA]</scope>
    <source>
        <strain>Eklund 17B / Type B</strain>
    </source>
</reference>
<proteinExistence type="inferred from homology"/>
<accession>B2TQY6</accession>
<feature type="chain" id="PRO_1000093870" description="Holo-[acyl-carrier-protein] synthase">
    <location>
        <begin position="1"/>
        <end position="123"/>
    </location>
</feature>
<feature type="binding site" evidence="1">
    <location>
        <position position="8"/>
    </location>
    <ligand>
        <name>Mg(2+)</name>
        <dbReference type="ChEBI" id="CHEBI:18420"/>
    </ligand>
</feature>
<feature type="binding site" evidence="1">
    <location>
        <position position="56"/>
    </location>
    <ligand>
        <name>Mg(2+)</name>
        <dbReference type="ChEBI" id="CHEBI:18420"/>
    </ligand>
</feature>
<dbReference type="EC" id="2.7.8.7" evidence="1"/>
<dbReference type="EMBL" id="CP001056">
    <property type="protein sequence ID" value="ACD24822.1"/>
    <property type="molecule type" value="Genomic_DNA"/>
</dbReference>
<dbReference type="SMR" id="B2TQY6"/>
<dbReference type="KEGG" id="cbk:CLL_A3366"/>
<dbReference type="HOGENOM" id="CLU_089696_0_2_9"/>
<dbReference type="Proteomes" id="UP000001195">
    <property type="component" value="Chromosome"/>
</dbReference>
<dbReference type="GO" id="GO:0005737">
    <property type="term" value="C:cytoplasm"/>
    <property type="evidence" value="ECO:0007669"/>
    <property type="project" value="UniProtKB-SubCell"/>
</dbReference>
<dbReference type="GO" id="GO:0008897">
    <property type="term" value="F:holo-[acyl-carrier-protein] synthase activity"/>
    <property type="evidence" value="ECO:0007669"/>
    <property type="project" value="UniProtKB-UniRule"/>
</dbReference>
<dbReference type="GO" id="GO:0000287">
    <property type="term" value="F:magnesium ion binding"/>
    <property type="evidence" value="ECO:0007669"/>
    <property type="project" value="UniProtKB-UniRule"/>
</dbReference>
<dbReference type="GO" id="GO:0006633">
    <property type="term" value="P:fatty acid biosynthetic process"/>
    <property type="evidence" value="ECO:0007669"/>
    <property type="project" value="UniProtKB-UniRule"/>
</dbReference>
<dbReference type="Gene3D" id="3.90.470.20">
    <property type="entry name" value="4'-phosphopantetheinyl transferase domain"/>
    <property type="match status" value="1"/>
</dbReference>
<dbReference type="HAMAP" id="MF_00101">
    <property type="entry name" value="AcpS"/>
    <property type="match status" value="1"/>
</dbReference>
<dbReference type="InterPro" id="IPR008278">
    <property type="entry name" value="4-PPantetheinyl_Trfase_dom"/>
</dbReference>
<dbReference type="InterPro" id="IPR037143">
    <property type="entry name" value="4-PPantetheinyl_Trfase_dom_sf"/>
</dbReference>
<dbReference type="InterPro" id="IPR002582">
    <property type="entry name" value="ACPS"/>
</dbReference>
<dbReference type="InterPro" id="IPR004568">
    <property type="entry name" value="Ppantetheine-prot_Trfase_dom"/>
</dbReference>
<dbReference type="NCBIfam" id="TIGR00516">
    <property type="entry name" value="acpS"/>
    <property type="match status" value="1"/>
</dbReference>
<dbReference type="NCBIfam" id="TIGR00556">
    <property type="entry name" value="pantethn_trn"/>
    <property type="match status" value="1"/>
</dbReference>
<dbReference type="Pfam" id="PF01648">
    <property type="entry name" value="ACPS"/>
    <property type="match status" value="1"/>
</dbReference>
<dbReference type="SUPFAM" id="SSF56214">
    <property type="entry name" value="4'-phosphopantetheinyl transferase"/>
    <property type="match status" value="1"/>
</dbReference>
<sequence>MIRGIGTDIVEIERIKKAIKSNPNFINRFFTQKEIEYFKLRKFNANTISGNFAAKEAVSKALGSGFRGFGLKDIEVLRDELGKPIVNLSDKLYKMFNLDNYNIFISISHSNTDAIAYAIIEVI</sequence>
<comment type="function">
    <text evidence="1">Transfers the 4'-phosphopantetheine moiety from coenzyme A to a Ser of acyl-carrier-protein.</text>
</comment>
<comment type="catalytic activity">
    <reaction evidence="1">
        <text>apo-[ACP] + CoA = holo-[ACP] + adenosine 3',5'-bisphosphate + H(+)</text>
        <dbReference type="Rhea" id="RHEA:12068"/>
        <dbReference type="Rhea" id="RHEA-COMP:9685"/>
        <dbReference type="Rhea" id="RHEA-COMP:9690"/>
        <dbReference type="ChEBI" id="CHEBI:15378"/>
        <dbReference type="ChEBI" id="CHEBI:29999"/>
        <dbReference type="ChEBI" id="CHEBI:57287"/>
        <dbReference type="ChEBI" id="CHEBI:58343"/>
        <dbReference type="ChEBI" id="CHEBI:64479"/>
        <dbReference type="EC" id="2.7.8.7"/>
    </reaction>
</comment>
<comment type="cofactor">
    <cofactor evidence="1">
        <name>Mg(2+)</name>
        <dbReference type="ChEBI" id="CHEBI:18420"/>
    </cofactor>
</comment>
<comment type="subcellular location">
    <subcellularLocation>
        <location evidence="1">Cytoplasm</location>
    </subcellularLocation>
</comment>
<comment type="similarity">
    <text evidence="1">Belongs to the P-Pant transferase superfamily. AcpS family.</text>
</comment>
<evidence type="ECO:0000255" key="1">
    <source>
        <dbReference type="HAMAP-Rule" id="MF_00101"/>
    </source>
</evidence>
<keyword id="KW-0963">Cytoplasm</keyword>
<keyword id="KW-0275">Fatty acid biosynthesis</keyword>
<keyword id="KW-0276">Fatty acid metabolism</keyword>
<keyword id="KW-0444">Lipid biosynthesis</keyword>
<keyword id="KW-0443">Lipid metabolism</keyword>
<keyword id="KW-0460">Magnesium</keyword>
<keyword id="KW-0479">Metal-binding</keyword>
<keyword id="KW-0808">Transferase</keyword>
<organism>
    <name type="scientific">Clostridium botulinum (strain Eklund 17B / Type B)</name>
    <dbReference type="NCBI Taxonomy" id="935198"/>
    <lineage>
        <taxon>Bacteria</taxon>
        <taxon>Bacillati</taxon>
        <taxon>Bacillota</taxon>
        <taxon>Clostridia</taxon>
        <taxon>Eubacteriales</taxon>
        <taxon>Clostridiaceae</taxon>
        <taxon>Clostridium</taxon>
    </lineage>
</organism>
<gene>
    <name evidence="1" type="primary">acpS</name>
    <name type="ordered locus">CLL_A3366</name>
</gene>
<name>ACPS_CLOBB</name>
<protein>
    <recommendedName>
        <fullName evidence="1">Holo-[acyl-carrier-protein] synthase</fullName>
        <shortName evidence="1">Holo-ACP synthase</shortName>
        <ecNumber evidence="1">2.7.8.7</ecNumber>
    </recommendedName>
    <alternativeName>
        <fullName evidence="1">4'-phosphopantetheinyl transferase AcpS</fullName>
    </alternativeName>
</protein>